<comment type="function">
    <text evidence="1">Binds to the 23S rRNA.</text>
</comment>
<comment type="similarity">
    <text evidence="1">Belongs to the bacterial ribosomal protein bL9 family.</text>
</comment>
<feature type="chain" id="PRO_0000258495" description="Large ribosomal subunit protein bL9">
    <location>
        <begin position="1"/>
        <end position="150"/>
    </location>
</feature>
<reference key="1">
    <citation type="journal article" date="2006" name="Proc. Natl. Acad. Sci. U.S.A.">
        <title>Molecular genetic anatomy of inter- and intraserotype variation in the human bacterial pathogen group A Streptococcus.</title>
        <authorList>
            <person name="Beres S.B."/>
            <person name="Richter E.W."/>
            <person name="Nagiec M.J."/>
            <person name="Sumby P."/>
            <person name="Porcella S.F."/>
            <person name="DeLeo F.R."/>
            <person name="Musser J.M."/>
        </authorList>
    </citation>
    <scope>NUCLEOTIDE SEQUENCE [LARGE SCALE GENOMIC DNA]</scope>
    <source>
        <strain>MGAS10750</strain>
    </source>
</reference>
<proteinExistence type="inferred from homology"/>
<name>RL9_STRPF</name>
<evidence type="ECO:0000255" key="1">
    <source>
        <dbReference type="HAMAP-Rule" id="MF_00503"/>
    </source>
</evidence>
<evidence type="ECO:0000305" key="2"/>
<gene>
    <name evidence="1" type="primary">rplI</name>
    <name type="ordered locus">MGAS10750_Spy1952</name>
</gene>
<sequence>MKVIFLADVKGKGKKGEIKEVPTGYAQNFLIKKNLAKEATSQSIGELKGKQKAEEKAQAEILAEAQAVKAVLDEDKTRVQFQEKVGPDGRTFGSITAKKISEELQKQFGVKVDKRHIVLDHPIRAIGLIEVPVKLHKEVTAEIKLAITEA</sequence>
<organism>
    <name type="scientific">Streptococcus pyogenes serotype M4 (strain MGAS10750)</name>
    <dbReference type="NCBI Taxonomy" id="370554"/>
    <lineage>
        <taxon>Bacteria</taxon>
        <taxon>Bacillati</taxon>
        <taxon>Bacillota</taxon>
        <taxon>Bacilli</taxon>
        <taxon>Lactobacillales</taxon>
        <taxon>Streptococcaceae</taxon>
        <taxon>Streptococcus</taxon>
    </lineage>
</organism>
<protein>
    <recommendedName>
        <fullName evidence="1">Large ribosomal subunit protein bL9</fullName>
    </recommendedName>
    <alternativeName>
        <fullName evidence="2">50S ribosomal protein L9</fullName>
    </alternativeName>
</protein>
<dbReference type="EMBL" id="CP000262">
    <property type="protein sequence ID" value="ABF38902.1"/>
    <property type="molecule type" value="Genomic_DNA"/>
</dbReference>
<dbReference type="SMR" id="Q1J459"/>
<dbReference type="KEGG" id="spi:MGAS10750_Spy1952"/>
<dbReference type="HOGENOM" id="CLU_078938_3_2_9"/>
<dbReference type="Proteomes" id="UP000002434">
    <property type="component" value="Chromosome"/>
</dbReference>
<dbReference type="GO" id="GO:1990904">
    <property type="term" value="C:ribonucleoprotein complex"/>
    <property type="evidence" value="ECO:0007669"/>
    <property type="project" value="UniProtKB-KW"/>
</dbReference>
<dbReference type="GO" id="GO:0005840">
    <property type="term" value="C:ribosome"/>
    <property type="evidence" value="ECO:0007669"/>
    <property type="project" value="UniProtKB-KW"/>
</dbReference>
<dbReference type="GO" id="GO:0019843">
    <property type="term" value="F:rRNA binding"/>
    <property type="evidence" value="ECO:0007669"/>
    <property type="project" value="UniProtKB-UniRule"/>
</dbReference>
<dbReference type="GO" id="GO:0003735">
    <property type="term" value="F:structural constituent of ribosome"/>
    <property type="evidence" value="ECO:0007669"/>
    <property type="project" value="InterPro"/>
</dbReference>
<dbReference type="GO" id="GO:0006412">
    <property type="term" value="P:translation"/>
    <property type="evidence" value="ECO:0007669"/>
    <property type="project" value="UniProtKB-UniRule"/>
</dbReference>
<dbReference type="FunFam" id="3.40.5.10:FF:000002">
    <property type="entry name" value="50S ribosomal protein L9"/>
    <property type="match status" value="1"/>
</dbReference>
<dbReference type="Gene3D" id="3.10.430.100">
    <property type="entry name" value="Ribosomal protein L9, C-terminal domain"/>
    <property type="match status" value="1"/>
</dbReference>
<dbReference type="Gene3D" id="3.40.5.10">
    <property type="entry name" value="Ribosomal protein L9, N-terminal domain"/>
    <property type="match status" value="1"/>
</dbReference>
<dbReference type="HAMAP" id="MF_00503">
    <property type="entry name" value="Ribosomal_bL9"/>
    <property type="match status" value="1"/>
</dbReference>
<dbReference type="InterPro" id="IPR000244">
    <property type="entry name" value="Ribosomal_bL9"/>
</dbReference>
<dbReference type="InterPro" id="IPR009027">
    <property type="entry name" value="Ribosomal_bL9/RNase_H1_N"/>
</dbReference>
<dbReference type="InterPro" id="IPR020594">
    <property type="entry name" value="Ribosomal_bL9_bac/chp"/>
</dbReference>
<dbReference type="InterPro" id="IPR020069">
    <property type="entry name" value="Ribosomal_bL9_C"/>
</dbReference>
<dbReference type="InterPro" id="IPR036791">
    <property type="entry name" value="Ribosomal_bL9_C_sf"/>
</dbReference>
<dbReference type="InterPro" id="IPR020070">
    <property type="entry name" value="Ribosomal_bL9_N"/>
</dbReference>
<dbReference type="InterPro" id="IPR036935">
    <property type="entry name" value="Ribosomal_bL9_N_sf"/>
</dbReference>
<dbReference type="NCBIfam" id="TIGR00158">
    <property type="entry name" value="L9"/>
    <property type="match status" value="1"/>
</dbReference>
<dbReference type="PANTHER" id="PTHR21368">
    <property type="entry name" value="50S RIBOSOMAL PROTEIN L9"/>
    <property type="match status" value="1"/>
</dbReference>
<dbReference type="Pfam" id="PF03948">
    <property type="entry name" value="Ribosomal_L9_C"/>
    <property type="match status" value="1"/>
</dbReference>
<dbReference type="Pfam" id="PF01281">
    <property type="entry name" value="Ribosomal_L9_N"/>
    <property type="match status" value="1"/>
</dbReference>
<dbReference type="SUPFAM" id="SSF55658">
    <property type="entry name" value="L9 N-domain-like"/>
    <property type="match status" value="1"/>
</dbReference>
<dbReference type="SUPFAM" id="SSF55653">
    <property type="entry name" value="Ribosomal protein L9 C-domain"/>
    <property type="match status" value="1"/>
</dbReference>
<dbReference type="PROSITE" id="PS00651">
    <property type="entry name" value="RIBOSOMAL_L9"/>
    <property type="match status" value="1"/>
</dbReference>
<accession>Q1J459</accession>
<keyword id="KW-0687">Ribonucleoprotein</keyword>
<keyword id="KW-0689">Ribosomal protein</keyword>
<keyword id="KW-0694">RNA-binding</keyword>
<keyword id="KW-0699">rRNA-binding</keyword>